<keyword id="KW-0997">Cell inner membrane</keyword>
<keyword id="KW-1003">Cell membrane</keyword>
<keyword id="KW-0472">Membrane</keyword>
<keyword id="KW-0812">Transmembrane</keyword>
<keyword id="KW-1133">Transmembrane helix</keyword>
<reference key="1">
    <citation type="journal article" date="2003" name="Mol. Microbiol.">
        <title>A hexA homologue from Photorhabdus regulates pathogenicity, symbiosis and phenotypic variation.</title>
        <authorList>
            <person name="Joyce S.A."/>
            <person name="Clarke D.J."/>
        </authorList>
    </citation>
    <scope>NUCLEOTIDE SEQUENCE [GENOMIC DNA]</scope>
    <source>
        <strain>K122</strain>
    </source>
</reference>
<dbReference type="EMBL" id="AY137386">
    <property type="protein sequence ID" value="AAN08358.1"/>
    <property type="molecule type" value="Genomic_DNA"/>
</dbReference>
<dbReference type="GO" id="GO:0005886">
    <property type="term" value="C:plasma membrane"/>
    <property type="evidence" value="ECO:0007669"/>
    <property type="project" value="UniProtKB-SubCell"/>
</dbReference>
<dbReference type="HAMAP" id="MF_01101">
    <property type="entry name" value="UPF0208"/>
    <property type="match status" value="1"/>
</dbReference>
<dbReference type="InterPro" id="IPR007334">
    <property type="entry name" value="UPF0208"/>
</dbReference>
<dbReference type="NCBIfam" id="NF002493">
    <property type="entry name" value="PRK01816.1"/>
    <property type="match status" value="1"/>
</dbReference>
<dbReference type="Pfam" id="PF04217">
    <property type="entry name" value="DUF412"/>
    <property type="match status" value="1"/>
</dbReference>
<accession>Q8GLH3</accession>
<comment type="subcellular location">
    <subcellularLocation>
        <location evidence="1">Cell inner membrane</location>
        <topology evidence="1">Multi-pass membrane protein</topology>
    </subcellularLocation>
</comment>
<comment type="similarity">
    <text evidence="3">Belongs to the UPF0208 family.</text>
</comment>
<name>Y2295_PHOTE</name>
<protein>
    <recommendedName>
        <fullName>UPF0208 membrane protein YfbV</fullName>
    </recommendedName>
</protein>
<sequence>MSTMPPASSGWIRKMQLGQQYMKTWPIEKQLAPMFPENRIIKATRFGIRFMPPLAIFTLTWQIALGGQLGPAVATALFACSLPMQGLWWLGKRASTPLPATLLKWFHEIRDKFAEAGIAMAPVRQTPTYQSLAELLKLAFKQLDRSFLDDI</sequence>
<evidence type="ECO:0000250" key="1"/>
<evidence type="ECO:0000255" key="2"/>
<evidence type="ECO:0000305" key="3"/>
<organism>
    <name type="scientific">Photorhabdus temperata</name>
    <dbReference type="NCBI Taxonomy" id="574560"/>
    <lineage>
        <taxon>Bacteria</taxon>
        <taxon>Pseudomonadati</taxon>
        <taxon>Pseudomonadota</taxon>
        <taxon>Gammaproteobacteria</taxon>
        <taxon>Enterobacterales</taxon>
        <taxon>Morganellaceae</taxon>
        <taxon>Photorhabdus</taxon>
    </lineage>
</organism>
<proteinExistence type="inferred from homology"/>
<gene>
    <name type="primary">yfbV</name>
</gene>
<feature type="chain" id="PRO_0000080818" description="UPF0208 membrane protein YfbV">
    <location>
        <begin position="1"/>
        <end position="151"/>
    </location>
</feature>
<feature type="transmembrane region" description="Helical" evidence="2">
    <location>
        <begin position="46"/>
        <end position="65"/>
    </location>
</feature>
<feature type="transmembrane region" description="Helical" evidence="2">
    <location>
        <begin position="69"/>
        <end position="91"/>
    </location>
</feature>